<accession>P13563</accession>
<accession>Q5D0A1</accession>
<proteinExistence type="evidence at protein level"/>
<reference key="1">
    <citation type="journal article" date="1988" name="Dev. Biol.">
        <title>Accumulation and decay of DG42 gene products follow a gradient pattern during Xenopus embryogenesis.</title>
        <authorList>
            <person name="Rosa F."/>
            <person name="Sargent T.D."/>
            <person name="Rebbert M.L."/>
            <person name="Michaels G.S."/>
            <person name="Jamrich M."/>
            <person name="Grunz H."/>
            <person name="Jonas E."/>
            <person name="Winkles J.A."/>
            <person name="Dawid I.B."/>
        </authorList>
    </citation>
    <scope>NUCLEOTIDE SEQUENCE [MRNA]</scope>
    <scope>FUNCTION</scope>
    <scope>TISSUE SPECIFICITY</scope>
    <scope>DEVELOPMENTAL STAGE</scope>
    <source>
        <tissue>Gastrula</tissue>
    </source>
</reference>
<reference key="2">
    <citation type="journal article" date="1998" name="J. Biol. Chem.">
        <title>Characterization and molecular evolution of a vertebrate hyaluronan synthase gene family.</title>
        <authorList>
            <person name="Spicer A.P."/>
            <person name="McDonald J.A."/>
        </authorList>
    </citation>
    <scope>NUCLEOTIDE SEQUENCE [MRNA]</scope>
    <scope>FUNCTION</scope>
    <scope>CATALYTIC ACTIVITY</scope>
    <scope>DEVELOPMENTAL STAGE</scope>
</reference>
<reference key="3">
    <citation type="submission" date="2003-03" db="EMBL/GenBank/DDBJ databases">
        <authorList>
            <consortium name="NIH - Xenopus Gene Collection (XGC) project"/>
        </authorList>
    </citation>
    <scope>NUCLEOTIDE SEQUENCE [LARGE SCALE MRNA]</scope>
    <source>
        <tissue>Neurula</tissue>
    </source>
</reference>
<feature type="chain" id="PRO_0000197171" description="Hyaluronan synthase 1">
    <location>
        <begin position="1"/>
        <end position="588"/>
    </location>
</feature>
<feature type="topological domain" description="Cytoplasmic" evidence="1">
    <location>
        <begin position="1"/>
        <end position="28"/>
    </location>
</feature>
<feature type="transmembrane region" description="Helical; Name=1" evidence="1">
    <location>
        <begin position="29"/>
        <end position="49"/>
    </location>
</feature>
<feature type="topological domain" description="Extracellular" evidence="1">
    <location>
        <begin position="50"/>
        <end position="61"/>
    </location>
</feature>
<feature type="transmembrane region" description="Helical; Name=2" evidence="1">
    <location>
        <begin position="62"/>
        <end position="82"/>
    </location>
</feature>
<feature type="topological domain" description="Cytoplasmic" evidence="1">
    <location>
        <begin position="83"/>
        <end position="411"/>
    </location>
</feature>
<feature type="transmembrane region" description="Helical; Name=3" evidence="1">
    <location>
        <begin position="412"/>
        <end position="432"/>
    </location>
</feature>
<feature type="topological domain" description="Extracellular" evidence="1">
    <location>
        <position position="433"/>
    </location>
</feature>
<feature type="transmembrane region" description="Helical; Name=4" evidence="1">
    <location>
        <begin position="434"/>
        <end position="454"/>
    </location>
</feature>
<feature type="topological domain" description="Cytoplasmic" evidence="1">
    <location>
        <begin position="455"/>
        <end position="456"/>
    </location>
</feature>
<feature type="transmembrane region" description="Helical; Name=5" evidence="1">
    <location>
        <begin position="457"/>
        <end position="477"/>
    </location>
</feature>
<feature type="topological domain" description="Extracellular" evidence="1">
    <location>
        <begin position="478"/>
        <end position="505"/>
    </location>
</feature>
<feature type="transmembrane region" description="Helical; Name=6" evidence="1">
    <location>
        <begin position="506"/>
        <end position="526"/>
    </location>
</feature>
<feature type="topological domain" description="Cytoplasmic" evidence="1">
    <location>
        <begin position="527"/>
        <end position="543"/>
    </location>
</feature>
<feature type="transmembrane region" description="Helical; Name=7" evidence="1">
    <location>
        <begin position="544"/>
        <end position="564"/>
    </location>
</feature>
<feature type="topological domain" description="Extracellular" evidence="1">
    <location>
        <begin position="565"/>
        <end position="588"/>
    </location>
</feature>
<feature type="helix" evidence="5">
    <location>
        <begin position="24"/>
        <end position="52"/>
    </location>
</feature>
<feature type="helix" evidence="5">
    <location>
        <begin position="55"/>
        <end position="57"/>
    </location>
</feature>
<feature type="helix" evidence="5">
    <location>
        <begin position="58"/>
        <end position="89"/>
    </location>
</feature>
<feature type="strand" evidence="5">
    <location>
        <begin position="100"/>
        <end position="108"/>
    </location>
</feature>
<feature type="helix" evidence="5">
    <location>
        <begin position="111"/>
        <end position="122"/>
    </location>
</feature>
<feature type="helix" evidence="5">
    <location>
        <begin position="128"/>
        <end position="130"/>
    </location>
</feature>
<feature type="strand" evidence="5">
    <location>
        <begin position="131"/>
        <end position="138"/>
    </location>
</feature>
<feature type="helix" evidence="5">
    <location>
        <begin position="142"/>
        <end position="144"/>
    </location>
</feature>
<feature type="helix" evidence="5">
    <location>
        <begin position="145"/>
        <end position="155"/>
    </location>
</feature>
<feature type="strand" evidence="7">
    <location>
        <begin position="156"/>
        <end position="158"/>
    </location>
</feature>
<feature type="strand" evidence="5">
    <location>
        <begin position="160"/>
        <end position="163"/>
    </location>
</feature>
<feature type="helix" evidence="5">
    <location>
        <begin position="195"/>
        <end position="205"/>
    </location>
</feature>
<feature type="strand" evidence="5">
    <location>
        <begin position="207"/>
        <end position="212"/>
    </location>
</feature>
<feature type="helix" evidence="5">
    <location>
        <begin position="218"/>
        <end position="229"/>
    </location>
</feature>
<feature type="strand" evidence="5">
    <location>
        <begin position="234"/>
        <end position="240"/>
    </location>
</feature>
<feature type="strand" evidence="7">
    <location>
        <begin position="243"/>
        <end position="245"/>
    </location>
</feature>
<feature type="helix" evidence="5">
    <location>
        <begin position="249"/>
        <end position="259"/>
    </location>
</feature>
<feature type="strand" evidence="5">
    <location>
        <begin position="261"/>
        <end position="273"/>
    </location>
</feature>
<feature type="helix" evidence="5">
    <location>
        <begin position="279"/>
        <end position="301"/>
    </location>
</feature>
<feature type="strand" evidence="5">
    <location>
        <begin position="310"/>
        <end position="316"/>
    </location>
</feature>
<feature type="helix" evidence="5">
    <location>
        <begin position="317"/>
        <end position="328"/>
    </location>
</feature>
<feature type="strand" evidence="6">
    <location>
        <begin position="331"/>
        <end position="336"/>
    </location>
</feature>
<feature type="helix" evidence="5">
    <location>
        <begin position="342"/>
        <end position="351"/>
    </location>
</feature>
<feature type="strand" evidence="5">
    <location>
        <begin position="355"/>
        <end position="366"/>
    </location>
</feature>
<feature type="helix" evidence="5">
    <location>
        <begin position="374"/>
        <end position="393"/>
    </location>
</feature>
<feature type="helix" evidence="6">
    <location>
        <begin position="394"/>
        <end position="396"/>
    </location>
</feature>
<feature type="helix" evidence="5">
    <location>
        <begin position="397"/>
        <end position="399"/>
    </location>
</feature>
<feature type="helix" evidence="5">
    <location>
        <begin position="402"/>
        <end position="426"/>
    </location>
</feature>
<feature type="helix" evidence="5">
    <location>
        <begin position="431"/>
        <end position="456"/>
    </location>
</feature>
<feature type="helix" evidence="5">
    <location>
        <begin position="459"/>
        <end position="466"/>
    </location>
</feature>
<feature type="helix" evidence="5">
    <location>
        <begin position="467"/>
        <end position="473"/>
    </location>
</feature>
<feature type="helix" evidence="5">
    <location>
        <begin position="475"/>
        <end position="485"/>
    </location>
</feature>
<feature type="strand" evidence="7">
    <location>
        <begin position="496"/>
        <end position="498"/>
    </location>
</feature>
<feature type="helix" evidence="5">
    <location>
        <begin position="506"/>
        <end position="529"/>
    </location>
</feature>
<feature type="helix" evidence="5">
    <location>
        <begin position="538"/>
        <end position="567"/>
    </location>
</feature>
<comment type="function">
    <text evidence="2 3">Catalyzes the addition of GlcNAc or GlcUA monosaccharides to the nascent hyaluronan polymer. Therefore, it is essential to hyaluronan synthesis a major component of most extracellular matrices that has a structural role in tissues architectures and regulates cell adhesion, migration and differentiation. Also able to catalyze the synthesis of chito-oligosaccharide depending on the substrate.</text>
</comment>
<comment type="catalytic activity">
    <reaction evidence="3">
        <text>[hyaluronan](n) + UDP-N-acetyl-alpha-D-glucosamine = N-acetyl-beta-D-glucosaminyl-(1-&gt;4)-[hyaluronan](n) + UDP + H(+)</text>
        <dbReference type="Rhea" id="RHEA:20465"/>
        <dbReference type="Rhea" id="RHEA-COMP:12583"/>
        <dbReference type="Rhea" id="RHEA-COMP:12585"/>
        <dbReference type="ChEBI" id="CHEBI:15378"/>
        <dbReference type="ChEBI" id="CHEBI:57705"/>
        <dbReference type="ChEBI" id="CHEBI:58223"/>
        <dbReference type="ChEBI" id="CHEBI:132153"/>
        <dbReference type="ChEBI" id="CHEBI:132154"/>
        <dbReference type="EC" id="2.4.1.212"/>
    </reaction>
</comment>
<comment type="catalytic activity">
    <reaction evidence="3">
        <text>N-acetyl-beta-D-glucosaminyl-(1-&gt;4)-[hyaluronan](n) + UDP-alpha-D-glucuronate = [hyaluronan](n+1) + UDP + H(+)</text>
        <dbReference type="Rhea" id="RHEA:12528"/>
        <dbReference type="Rhea" id="RHEA-COMP:12585"/>
        <dbReference type="Rhea" id="RHEA-COMP:12587"/>
        <dbReference type="ChEBI" id="CHEBI:15378"/>
        <dbReference type="ChEBI" id="CHEBI:58052"/>
        <dbReference type="ChEBI" id="CHEBI:58223"/>
        <dbReference type="ChEBI" id="CHEBI:132153"/>
        <dbReference type="ChEBI" id="CHEBI:132154"/>
        <dbReference type="EC" id="2.4.1.212"/>
    </reaction>
</comment>
<comment type="cofactor">
    <cofactor>
        <name>Mg(2+)</name>
        <dbReference type="ChEBI" id="CHEBI:18420"/>
    </cofactor>
</comment>
<comment type="pathway">
    <text>Glycan biosynthesis; hyaluronan biosynthesis.</text>
</comment>
<comment type="subcellular location">
    <subcellularLocation>
        <location evidence="4">Membrane</location>
        <topology evidence="4">Multi-pass membrane protein</topology>
    </subcellularLocation>
</comment>
<comment type="tissue specificity">
    <text evidence="2">Expression moves as a gradient through the embryo. The mRNA is first expressed in the animal region of the blastula, and by early gastrula is found everywhere except in the outer layer of the dorsal blastopore lip. By mid-gastrula, protein is present in the inner ectodermal layer and the endoderm, then disappears from dorsal ectoderm as the neural plate is induced and later decays in a dorsoventral direction. Last expressed in ventral regions of the gut at the tailbud stage (at protein level).</text>
</comment>
<comment type="developmental stage">
    <text evidence="2 3">Expressed during a short window of embryogenesis. Expression of mRNA begins just after mid-blastula, peaks at late gastrula, and declines by the end of neurulation. Protein expression follows that of the mRNA with a time lag of approximately 2 hours: accumulates through gastrula and early neurula stages and peaks at about stage 18 (mid-neurula), then decays in a non-uniform manner, persisting about 12 to 18 hr longer than the RNA (at protein level).</text>
</comment>
<comment type="similarity">
    <text evidence="4">Belongs to the NodC/HAS family.</text>
</comment>
<protein>
    <recommendedName>
        <fullName>Hyaluronan synthase 1</fullName>
        <ecNumber>2.4.1.212</ecNumber>
    </recommendedName>
    <alternativeName>
        <fullName>DG42 protein</fullName>
    </alternativeName>
    <alternativeName>
        <fullName>Hyaluronate synthase 1</fullName>
    </alternativeName>
    <alternativeName>
        <fullName>Hyaluronic acid synthase 1</fullName>
        <shortName>HA synthase 1</shortName>
        <shortName>xHAS1</shortName>
    </alternativeName>
</protein>
<organism>
    <name type="scientific">Xenopus laevis</name>
    <name type="common">African clawed frog</name>
    <dbReference type="NCBI Taxonomy" id="8355"/>
    <lineage>
        <taxon>Eukaryota</taxon>
        <taxon>Metazoa</taxon>
        <taxon>Chordata</taxon>
        <taxon>Craniata</taxon>
        <taxon>Vertebrata</taxon>
        <taxon>Euteleostomi</taxon>
        <taxon>Amphibia</taxon>
        <taxon>Batrachia</taxon>
        <taxon>Anura</taxon>
        <taxon>Pipoidea</taxon>
        <taxon>Pipidae</taxon>
        <taxon>Xenopodinae</taxon>
        <taxon>Xenopus</taxon>
        <taxon>Xenopus</taxon>
    </lineage>
</organism>
<name>HYAS1_XENLA</name>
<keyword id="KW-0002">3D-structure</keyword>
<keyword id="KW-0328">Glycosyltransferase</keyword>
<keyword id="KW-0472">Membrane</keyword>
<keyword id="KW-1185">Reference proteome</keyword>
<keyword id="KW-0808">Transferase</keyword>
<keyword id="KW-0812">Transmembrane</keyword>
<keyword id="KW-1133">Transmembrane helix</keyword>
<dbReference type="EC" id="2.4.1.212"/>
<dbReference type="EMBL" id="M22249">
    <property type="protein sequence ID" value="AAA49699.1"/>
    <property type="molecule type" value="mRNA"/>
</dbReference>
<dbReference type="EMBL" id="BC047963">
    <property type="protein sequence ID" value="AAH47963.1"/>
    <property type="molecule type" value="mRNA"/>
</dbReference>
<dbReference type="EMBL" id="BC108480">
    <property type="protein sequence ID" value="AAI08481.1"/>
    <property type="molecule type" value="mRNA"/>
</dbReference>
<dbReference type="PIR" id="A43740">
    <property type="entry name" value="A43740"/>
</dbReference>
<dbReference type="RefSeq" id="NP_001079696.1">
    <property type="nucleotide sequence ID" value="NM_001086227.1"/>
</dbReference>
<dbReference type="PDB" id="8SMM">
    <property type="method" value="EM"/>
    <property type="resolution" value="3.20 A"/>
    <property type="chains" value="A=1-588"/>
</dbReference>
<dbReference type="PDB" id="8SMN">
    <property type="method" value="EM"/>
    <property type="resolution" value="3.20 A"/>
    <property type="chains" value="A=1-588"/>
</dbReference>
<dbReference type="PDB" id="8SMP">
    <property type="method" value="EM"/>
    <property type="resolution" value="3.40 A"/>
    <property type="chains" value="A=1-588"/>
</dbReference>
<dbReference type="PDBsum" id="8SMM"/>
<dbReference type="PDBsum" id="8SMN"/>
<dbReference type="PDBsum" id="8SMP"/>
<dbReference type="EMDB" id="EMD-40591"/>
<dbReference type="EMDB" id="EMD-40594"/>
<dbReference type="EMDB" id="EMD-40598"/>
<dbReference type="SMR" id="P13563"/>
<dbReference type="CAZy" id="GT2">
    <property type="family name" value="Glycosyltransferase Family 2"/>
</dbReference>
<dbReference type="DNASU" id="379383"/>
<dbReference type="GeneID" id="379383"/>
<dbReference type="KEGG" id="xla:379383"/>
<dbReference type="AGR" id="Xenbase:XB-GENE-6256069"/>
<dbReference type="CTD" id="379383"/>
<dbReference type="Xenbase" id="XB-GENE-6256069">
    <property type="gene designation" value="has1.S"/>
</dbReference>
<dbReference type="OMA" id="NSHETYT"/>
<dbReference type="OrthoDB" id="9876900at2759"/>
<dbReference type="UniPathway" id="UPA00341"/>
<dbReference type="Proteomes" id="UP000186698">
    <property type="component" value="Chromosome 3S"/>
</dbReference>
<dbReference type="Bgee" id="379383">
    <property type="expression patterns" value="Expressed in gastrula and 13 other cell types or tissues"/>
</dbReference>
<dbReference type="GO" id="GO:0005886">
    <property type="term" value="C:plasma membrane"/>
    <property type="evidence" value="ECO:0000318"/>
    <property type="project" value="GO_Central"/>
</dbReference>
<dbReference type="GO" id="GO:0050501">
    <property type="term" value="F:hyaluronan synthase activity"/>
    <property type="evidence" value="ECO:0000314"/>
    <property type="project" value="UniProtKB"/>
</dbReference>
<dbReference type="GO" id="GO:0085029">
    <property type="term" value="P:extracellular matrix assembly"/>
    <property type="evidence" value="ECO:0000250"/>
    <property type="project" value="UniProtKB"/>
</dbReference>
<dbReference type="GO" id="GO:0030213">
    <property type="term" value="P:hyaluronan biosynthetic process"/>
    <property type="evidence" value="ECO:0000318"/>
    <property type="project" value="GO_Central"/>
</dbReference>
<dbReference type="GO" id="GO:0000271">
    <property type="term" value="P:polysaccharide biosynthetic process"/>
    <property type="evidence" value="ECO:0000250"/>
    <property type="project" value="UniProtKB"/>
</dbReference>
<dbReference type="Gene3D" id="3.90.550.10">
    <property type="entry name" value="Spore Coat Polysaccharide Biosynthesis Protein SpsA, Chain A"/>
    <property type="match status" value="1"/>
</dbReference>
<dbReference type="InterPro" id="IPR029044">
    <property type="entry name" value="Nucleotide-diphossugar_trans"/>
</dbReference>
<dbReference type="PANTHER" id="PTHR22913">
    <property type="entry name" value="HYALURONAN SYNTHASE"/>
    <property type="match status" value="1"/>
</dbReference>
<dbReference type="PANTHER" id="PTHR22913:SF13">
    <property type="entry name" value="HYALURONAN SYNTHASE 1"/>
    <property type="match status" value="1"/>
</dbReference>
<dbReference type="Pfam" id="PF13641">
    <property type="entry name" value="Glyco_tranf_2_3"/>
    <property type="match status" value="1"/>
</dbReference>
<dbReference type="SUPFAM" id="SSF53448">
    <property type="entry name" value="Nucleotide-diphospho-sugar transferases"/>
    <property type="match status" value="1"/>
</dbReference>
<evidence type="ECO:0000255" key="1"/>
<evidence type="ECO:0000269" key="2">
    <source>
    </source>
</evidence>
<evidence type="ECO:0000269" key="3">
    <source>
    </source>
</evidence>
<evidence type="ECO:0000305" key="4"/>
<evidence type="ECO:0007829" key="5">
    <source>
        <dbReference type="PDB" id="8SMM"/>
    </source>
</evidence>
<evidence type="ECO:0007829" key="6">
    <source>
        <dbReference type="PDB" id="8SMN"/>
    </source>
</evidence>
<evidence type="ECO:0007829" key="7">
    <source>
        <dbReference type="PDB" id="8SMP"/>
    </source>
</evidence>
<gene>
    <name type="primary">has1</name>
</gene>
<sequence>MKEKAAETMEIPEGIPKDLEPKHPTLWRIIYYSFGVVLLATITAAYVAEFQVLKHEAILFSLGLYGLAMLLHLMMQSLFAFLEIRRVNKSELPCSFKKTVALTIAGYQENPEYLIKCLESCKYVKYPKDKLKIILVIDGNTEDDAYMMEMFKDVFHGEDVGTYVWKGNYHTVKKPEETNKGSCPEVSKPLNEDEGINMVEELVRNKRCVCIMQQWGGKREVMYTAFQAIGTSVDYVQVCDSDTKLDELATVEMVKVLESNDMYGAVGGDVRILNPYDSFISFMSSLRYWMAFNVERACQSYFDCVSCISGPLGMYRNNILQVFLEAWYRQKFLGTYCTLGDDRHLTNRVLSMGYRTKYTHKSRAFSETPSLYLRWLNQQTRWTKSYFREWLYNAQWWHKHHIWMTYESVVSFIFPFFITATVIRLIYAGTIWNVVWLLLCIQIMSLFKSIYACWLRGNFIMLLMSLYSMLYMTGLLPSKYFALLTLNKTGWGTSGRKKIVGNYMPILPLSIWAAVLCGGVGYSIYMDCQNDWSTPEKQKEMYHLLYGCVGYVMYWVIMAVMYWVWVKRCCRKRSQTVTLVHDIPDMCV</sequence>